<dbReference type="EC" id="6.3.4.2" evidence="1"/>
<dbReference type="EMBL" id="CP000103">
    <property type="protein sequence ID" value="ABB74530.1"/>
    <property type="molecule type" value="Genomic_DNA"/>
</dbReference>
<dbReference type="RefSeq" id="WP_011380571.1">
    <property type="nucleotide sequence ID" value="NC_007614.1"/>
</dbReference>
<dbReference type="SMR" id="Q2Y9P1"/>
<dbReference type="STRING" id="323848.Nmul_A1227"/>
<dbReference type="MEROPS" id="C26.964"/>
<dbReference type="KEGG" id="nmu:Nmul_A1227"/>
<dbReference type="eggNOG" id="COG0504">
    <property type="taxonomic scope" value="Bacteria"/>
</dbReference>
<dbReference type="HOGENOM" id="CLU_011675_5_0_4"/>
<dbReference type="OrthoDB" id="9801107at2"/>
<dbReference type="UniPathway" id="UPA00159">
    <property type="reaction ID" value="UER00277"/>
</dbReference>
<dbReference type="Proteomes" id="UP000002718">
    <property type="component" value="Chromosome"/>
</dbReference>
<dbReference type="GO" id="GO:0005829">
    <property type="term" value="C:cytosol"/>
    <property type="evidence" value="ECO:0007669"/>
    <property type="project" value="TreeGrafter"/>
</dbReference>
<dbReference type="GO" id="GO:0005524">
    <property type="term" value="F:ATP binding"/>
    <property type="evidence" value="ECO:0007669"/>
    <property type="project" value="UniProtKB-KW"/>
</dbReference>
<dbReference type="GO" id="GO:0003883">
    <property type="term" value="F:CTP synthase activity"/>
    <property type="evidence" value="ECO:0007669"/>
    <property type="project" value="UniProtKB-UniRule"/>
</dbReference>
<dbReference type="GO" id="GO:0004359">
    <property type="term" value="F:glutaminase activity"/>
    <property type="evidence" value="ECO:0007669"/>
    <property type="project" value="RHEA"/>
</dbReference>
<dbReference type="GO" id="GO:0042802">
    <property type="term" value="F:identical protein binding"/>
    <property type="evidence" value="ECO:0007669"/>
    <property type="project" value="TreeGrafter"/>
</dbReference>
<dbReference type="GO" id="GO:0046872">
    <property type="term" value="F:metal ion binding"/>
    <property type="evidence" value="ECO:0007669"/>
    <property type="project" value="UniProtKB-KW"/>
</dbReference>
<dbReference type="GO" id="GO:0044210">
    <property type="term" value="P:'de novo' CTP biosynthetic process"/>
    <property type="evidence" value="ECO:0007669"/>
    <property type="project" value="UniProtKB-UniRule"/>
</dbReference>
<dbReference type="GO" id="GO:0019856">
    <property type="term" value="P:pyrimidine nucleobase biosynthetic process"/>
    <property type="evidence" value="ECO:0007669"/>
    <property type="project" value="TreeGrafter"/>
</dbReference>
<dbReference type="CDD" id="cd03113">
    <property type="entry name" value="CTPS_N"/>
    <property type="match status" value="1"/>
</dbReference>
<dbReference type="CDD" id="cd01746">
    <property type="entry name" value="GATase1_CTP_Synthase"/>
    <property type="match status" value="1"/>
</dbReference>
<dbReference type="FunFam" id="3.40.50.300:FF:000009">
    <property type="entry name" value="CTP synthase"/>
    <property type="match status" value="1"/>
</dbReference>
<dbReference type="FunFam" id="3.40.50.880:FF:000002">
    <property type="entry name" value="CTP synthase"/>
    <property type="match status" value="1"/>
</dbReference>
<dbReference type="Gene3D" id="3.40.50.880">
    <property type="match status" value="1"/>
</dbReference>
<dbReference type="Gene3D" id="3.40.50.300">
    <property type="entry name" value="P-loop containing nucleotide triphosphate hydrolases"/>
    <property type="match status" value="1"/>
</dbReference>
<dbReference type="HAMAP" id="MF_01227">
    <property type="entry name" value="PyrG"/>
    <property type="match status" value="1"/>
</dbReference>
<dbReference type="InterPro" id="IPR029062">
    <property type="entry name" value="Class_I_gatase-like"/>
</dbReference>
<dbReference type="InterPro" id="IPR004468">
    <property type="entry name" value="CTP_synthase"/>
</dbReference>
<dbReference type="InterPro" id="IPR017456">
    <property type="entry name" value="CTP_synthase_N"/>
</dbReference>
<dbReference type="InterPro" id="IPR017926">
    <property type="entry name" value="GATASE"/>
</dbReference>
<dbReference type="InterPro" id="IPR033828">
    <property type="entry name" value="GATase1_CTP_Synthase"/>
</dbReference>
<dbReference type="InterPro" id="IPR027417">
    <property type="entry name" value="P-loop_NTPase"/>
</dbReference>
<dbReference type="NCBIfam" id="NF003792">
    <property type="entry name" value="PRK05380.1"/>
    <property type="match status" value="1"/>
</dbReference>
<dbReference type="NCBIfam" id="TIGR00337">
    <property type="entry name" value="PyrG"/>
    <property type="match status" value="1"/>
</dbReference>
<dbReference type="PANTHER" id="PTHR11550">
    <property type="entry name" value="CTP SYNTHASE"/>
    <property type="match status" value="1"/>
</dbReference>
<dbReference type="PANTHER" id="PTHR11550:SF0">
    <property type="entry name" value="CTP SYNTHASE-RELATED"/>
    <property type="match status" value="1"/>
</dbReference>
<dbReference type="Pfam" id="PF06418">
    <property type="entry name" value="CTP_synth_N"/>
    <property type="match status" value="1"/>
</dbReference>
<dbReference type="Pfam" id="PF00117">
    <property type="entry name" value="GATase"/>
    <property type="match status" value="1"/>
</dbReference>
<dbReference type="SUPFAM" id="SSF52317">
    <property type="entry name" value="Class I glutamine amidotransferase-like"/>
    <property type="match status" value="1"/>
</dbReference>
<dbReference type="SUPFAM" id="SSF52540">
    <property type="entry name" value="P-loop containing nucleoside triphosphate hydrolases"/>
    <property type="match status" value="1"/>
</dbReference>
<dbReference type="PROSITE" id="PS51273">
    <property type="entry name" value="GATASE_TYPE_1"/>
    <property type="match status" value="1"/>
</dbReference>
<name>PYRG_NITMU</name>
<accession>Q2Y9P1</accession>
<sequence length="566" mass="62377">MTKYVFVTGGVVSSLGKGIAAASLAAILETRGIKVTLLKLDPYINVDPGTMSPFQHGEVFVTEDGAETDLDLGHYERFISGKMTRRNNFTTGQIYESVIKKERRGDYLGGTVQVIPHITDEIKHYIRVGAGDAQVAIVEIGGTVGDIESLPFLEAIRQMAVQLPREDTCFIHLTLLPYITSAGELKTKPTQHSVKELREIGIQPDVLLCRADRALPADERRKIALFTNVREEAVILALDVDSIYKIPSLLHDQMLDEIVCHKLNLLAKAADLSTWKKLVHALEHPERVIEIALVGKYVDLTESYKSLSEALIHAGIHTRSKINIHYVDSESIEKDGTGCLDGMDAILVPGGFGKRGVEGKIMAIHFARTNRIPYLGICLGMQLAVIEYARNKAGMQGAHSTEFHPETAYPVIALTIEWRSREGQLEIRTADSDLGGTMRLGGQECLLKEGSLARRIYGSDKIIERHRHRYEVNNQYIPRLEQAGMSISAVSAGEGLCEMVELPQTEHPWFVASQFHPEFTSTPRAGHPLFAAFIEAAAVFADKSPSSEGAISADKPERTTTGAYIQ</sequence>
<proteinExistence type="inferred from homology"/>
<protein>
    <recommendedName>
        <fullName evidence="1">CTP synthase</fullName>
        <ecNumber evidence="1">6.3.4.2</ecNumber>
    </recommendedName>
    <alternativeName>
        <fullName evidence="1">Cytidine 5'-triphosphate synthase</fullName>
    </alternativeName>
    <alternativeName>
        <fullName evidence="1">Cytidine triphosphate synthetase</fullName>
        <shortName evidence="1">CTP synthetase</shortName>
        <shortName evidence="1">CTPS</shortName>
    </alternativeName>
    <alternativeName>
        <fullName evidence="1">UTP--ammonia ligase</fullName>
    </alternativeName>
</protein>
<comment type="function">
    <text evidence="1">Catalyzes the ATP-dependent amination of UTP to CTP with either L-glutamine or ammonia as the source of nitrogen. Regulates intracellular CTP levels through interactions with the four ribonucleotide triphosphates.</text>
</comment>
<comment type="catalytic activity">
    <reaction evidence="1">
        <text>UTP + L-glutamine + ATP + H2O = CTP + L-glutamate + ADP + phosphate + 2 H(+)</text>
        <dbReference type="Rhea" id="RHEA:26426"/>
        <dbReference type="ChEBI" id="CHEBI:15377"/>
        <dbReference type="ChEBI" id="CHEBI:15378"/>
        <dbReference type="ChEBI" id="CHEBI:29985"/>
        <dbReference type="ChEBI" id="CHEBI:30616"/>
        <dbReference type="ChEBI" id="CHEBI:37563"/>
        <dbReference type="ChEBI" id="CHEBI:43474"/>
        <dbReference type="ChEBI" id="CHEBI:46398"/>
        <dbReference type="ChEBI" id="CHEBI:58359"/>
        <dbReference type="ChEBI" id="CHEBI:456216"/>
        <dbReference type="EC" id="6.3.4.2"/>
    </reaction>
</comment>
<comment type="catalytic activity">
    <reaction evidence="1">
        <text>L-glutamine + H2O = L-glutamate + NH4(+)</text>
        <dbReference type="Rhea" id="RHEA:15889"/>
        <dbReference type="ChEBI" id="CHEBI:15377"/>
        <dbReference type="ChEBI" id="CHEBI:28938"/>
        <dbReference type="ChEBI" id="CHEBI:29985"/>
        <dbReference type="ChEBI" id="CHEBI:58359"/>
    </reaction>
</comment>
<comment type="catalytic activity">
    <reaction evidence="1">
        <text>UTP + NH4(+) + ATP = CTP + ADP + phosphate + 2 H(+)</text>
        <dbReference type="Rhea" id="RHEA:16597"/>
        <dbReference type="ChEBI" id="CHEBI:15378"/>
        <dbReference type="ChEBI" id="CHEBI:28938"/>
        <dbReference type="ChEBI" id="CHEBI:30616"/>
        <dbReference type="ChEBI" id="CHEBI:37563"/>
        <dbReference type="ChEBI" id="CHEBI:43474"/>
        <dbReference type="ChEBI" id="CHEBI:46398"/>
        <dbReference type="ChEBI" id="CHEBI:456216"/>
    </reaction>
</comment>
<comment type="activity regulation">
    <text evidence="1">Allosterically activated by GTP, when glutamine is the substrate; GTP has no effect on the reaction when ammonia is the substrate. The allosteric effector GTP functions by stabilizing the protein conformation that binds the tetrahedral intermediate(s) formed during glutamine hydrolysis. Inhibited by the product CTP, via allosteric rather than competitive inhibition.</text>
</comment>
<comment type="pathway">
    <text evidence="1">Pyrimidine metabolism; CTP biosynthesis via de novo pathway; CTP from UDP: step 2/2.</text>
</comment>
<comment type="subunit">
    <text evidence="1">Homotetramer.</text>
</comment>
<comment type="miscellaneous">
    <text evidence="1">CTPSs have evolved a hybrid strategy for distinguishing between UTP and CTP. The overlapping regions of the product feedback inhibitory and substrate sites recognize a common feature in both compounds, the triphosphate moiety. To differentiate isosteric substrate and product pyrimidine rings, an additional pocket far from the expected kinase/ligase catalytic site, specifically recognizes the cytosine and ribose portions of the product inhibitor.</text>
</comment>
<comment type="similarity">
    <text evidence="1">Belongs to the CTP synthase family.</text>
</comment>
<keyword id="KW-0067">ATP-binding</keyword>
<keyword id="KW-0315">Glutamine amidotransferase</keyword>
<keyword id="KW-0436">Ligase</keyword>
<keyword id="KW-0460">Magnesium</keyword>
<keyword id="KW-0479">Metal-binding</keyword>
<keyword id="KW-0547">Nucleotide-binding</keyword>
<keyword id="KW-0665">Pyrimidine biosynthesis</keyword>
<keyword id="KW-1185">Reference proteome</keyword>
<evidence type="ECO:0000255" key="1">
    <source>
        <dbReference type="HAMAP-Rule" id="MF_01227"/>
    </source>
</evidence>
<evidence type="ECO:0000256" key="2">
    <source>
        <dbReference type="SAM" id="MobiDB-lite"/>
    </source>
</evidence>
<reference key="1">
    <citation type="submission" date="2005-08" db="EMBL/GenBank/DDBJ databases">
        <title>Complete sequence of chromosome 1 of Nitrosospira multiformis ATCC 25196.</title>
        <authorList>
            <person name="Copeland A."/>
            <person name="Lucas S."/>
            <person name="Lapidus A."/>
            <person name="Barry K."/>
            <person name="Detter J.C."/>
            <person name="Glavina T."/>
            <person name="Hammon N."/>
            <person name="Israni S."/>
            <person name="Pitluck S."/>
            <person name="Chain P."/>
            <person name="Malfatti S."/>
            <person name="Shin M."/>
            <person name="Vergez L."/>
            <person name="Schmutz J."/>
            <person name="Larimer F."/>
            <person name="Land M."/>
            <person name="Hauser L."/>
            <person name="Kyrpides N."/>
            <person name="Lykidis A."/>
            <person name="Richardson P."/>
        </authorList>
    </citation>
    <scope>NUCLEOTIDE SEQUENCE [LARGE SCALE GENOMIC DNA]</scope>
    <source>
        <strain>ATCC 25196 / NCIMB 11849 / C 71</strain>
    </source>
</reference>
<feature type="chain" id="PRO_0000266165" description="CTP synthase">
    <location>
        <begin position="1"/>
        <end position="566"/>
    </location>
</feature>
<feature type="domain" description="Glutamine amidotransferase type-1" evidence="1">
    <location>
        <begin position="290"/>
        <end position="543"/>
    </location>
</feature>
<feature type="region of interest" description="Amidoligase domain" evidence="1">
    <location>
        <begin position="1"/>
        <end position="265"/>
    </location>
</feature>
<feature type="region of interest" description="Disordered" evidence="2">
    <location>
        <begin position="545"/>
        <end position="566"/>
    </location>
</feature>
<feature type="active site" description="Nucleophile; for glutamine hydrolysis" evidence="1">
    <location>
        <position position="378"/>
    </location>
</feature>
<feature type="active site" evidence="1">
    <location>
        <position position="516"/>
    </location>
</feature>
<feature type="active site" evidence="1">
    <location>
        <position position="518"/>
    </location>
</feature>
<feature type="binding site" evidence="1">
    <location>
        <position position="13"/>
    </location>
    <ligand>
        <name>CTP</name>
        <dbReference type="ChEBI" id="CHEBI:37563"/>
        <note>allosteric inhibitor</note>
    </ligand>
</feature>
<feature type="binding site" evidence="1">
    <location>
        <position position="13"/>
    </location>
    <ligand>
        <name>UTP</name>
        <dbReference type="ChEBI" id="CHEBI:46398"/>
    </ligand>
</feature>
<feature type="binding site" evidence="1">
    <location>
        <begin position="14"/>
        <end position="19"/>
    </location>
    <ligand>
        <name>ATP</name>
        <dbReference type="ChEBI" id="CHEBI:30616"/>
    </ligand>
</feature>
<feature type="binding site" evidence="1">
    <location>
        <position position="71"/>
    </location>
    <ligand>
        <name>ATP</name>
        <dbReference type="ChEBI" id="CHEBI:30616"/>
    </ligand>
</feature>
<feature type="binding site" evidence="1">
    <location>
        <position position="71"/>
    </location>
    <ligand>
        <name>Mg(2+)</name>
        <dbReference type="ChEBI" id="CHEBI:18420"/>
    </ligand>
</feature>
<feature type="binding site" evidence="1">
    <location>
        <position position="139"/>
    </location>
    <ligand>
        <name>Mg(2+)</name>
        <dbReference type="ChEBI" id="CHEBI:18420"/>
    </ligand>
</feature>
<feature type="binding site" evidence="1">
    <location>
        <begin position="146"/>
        <end position="148"/>
    </location>
    <ligand>
        <name>CTP</name>
        <dbReference type="ChEBI" id="CHEBI:37563"/>
        <note>allosteric inhibitor</note>
    </ligand>
</feature>
<feature type="binding site" evidence="1">
    <location>
        <begin position="186"/>
        <end position="191"/>
    </location>
    <ligand>
        <name>CTP</name>
        <dbReference type="ChEBI" id="CHEBI:37563"/>
        <note>allosteric inhibitor</note>
    </ligand>
</feature>
<feature type="binding site" evidence="1">
    <location>
        <begin position="186"/>
        <end position="191"/>
    </location>
    <ligand>
        <name>UTP</name>
        <dbReference type="ChEBI" id="CHEBI:46398"/>
    </ligand>
</feature>
<feature type="binding site" evidence="1">
    <location>
        <position position="222"/>
    </location>
    <ligand>
        <name>CTP</name>
        <dbReference type="ChEBI" id="CHEBI:37563"/>
        <note>allosteric inhibitor</note>
    </ligand>
</feature>
<feature type="binding site" evidence="1">
    <location>
        <position position="222"/>
    </location>
    <ligand>
        <name>UTP</name>
        <dbReference type="ChEBI" id="CHEBI:46398"/>
    </ligand>
</feature>
<feature type="binding site" evidence="1">
    <location>
        <position position="351"/>
    </location>
    <ligand>
        <name>L-glutamine</name>
        <dbReference type="ChEBI" id="CHEBI:58359"/>
    </ligand>
</feature>
<feature type="binding site" evidence="1">
    <location>
        <begin position="379"/>
        <end position="382"/>
    </location>
    <ligand>
        <name>L-glutamine</name>
        <dbReference type="ChEBI" id="CHEBI:58359"/>
    </ligand>
</feature>
<feature type="binding site" evidence="1">
    <location>
        <position position="402"/>
    </location>
    <ligand>
        <name>L-glutamine</name>
        <dbReference type="ChEBI" id="CHEBI:58359"/>
    </ligand>
</feature>
<feature type="binding site" evidence="1">
    <location>
        <position position="469"/>
    </location>
    <ligand>
        <name>L-glutamine</name>
        <dbReference type="ChEBI" id="CHEBI:58359"/>
    </ligand>
</feature>
<gene>
    <name evidence="1" type="primary">pyrG</name>
    <name type="ordered locus">Nmul_A1227</name>
</gene>
<organism>
    <name type="scientific">Nitrosospira multiformis (strain ATCC 25196 / NCIMB 11849 / C 71)</name>
    <dbReference type="NCBI Taxonomy" id="323848"/>
    <lineage>
        <taxon>Bacteria</taxon>
        <taxon>Pseudomonadati</taxon>
        <taxon>Pseudomonadota</taxon>
        <taxon>Betaproteobacteria</taxon>
        <taxon>Nitrosomonadales</taxon>
        <taxon>Nitrosomonadaceae</taxon>
        <taxon>Nitrosospira</taxon>
    </lineage>
</organism>